<feature type="chain" id="PRO_0000457015" description="Echilunin cytochrome P450 monooxygenase">
    <location>
        <begin position="1"/>
        <end position="534"/>
    </location>
</feature>
<feature type="transmembrane region" description="Helical" evidence="3">
    <location>
        <begin position="18"/>
        <end position="38"/>
    </location>
</feature>
<feature type="binding site" description="axial binding residue" evidence="2">
    <location>
        <position position="441"/>
    </location>
    <ligand>
        <name>heme</name>
        <dbReference type="ChEBI" id="CHEBI:30413"/>
    </ligand>
    <ligandPart>
        <name>Fe</name>
        <dbReference type="ChEBI" id="CHEBI:18248"/>
    </ligandPart>
</feature>
<organism>
    <name type="scientific">Aspergillus ruber (strain CBS 135680)</name>
    <dbReference type="NCBI Taxonomy" id="1388766"/>
    <lineage>
        <taxon>Eukaryota</taxon>
        <taxon>Fungi</taxon>
        <taxon>Dikarya</taxon>
        <taxon>Ascomycota</taxon>
        <taxon>Pezizomycotina</taxon>
        <taxon>Eurotiomycetes</taxon>
        <taxon>Eurotiomycetidae</taxon>
        <taxon>Eurotiales</taxon>
        <taxon>Aspergillaceae</taxon>
        <taxon>Aspergillus</taxon>
        <taxon>Aspergillus subgen. Aspergillus</taxon>
    </lineage>
</organism>
<name>EP450_ASPRC</name>
<protein>
    <recommendedName>
        <fullName evidence="6">Echilunin cytochrome P450 monooxygenase</fullName>
        <shortName evidence="6">EchP450</shortName>
        <ecNumber evidence="5">1.-.-.-</ecNumber>
    </recommendedName>
    <alternativeName>
        <fullName evidence="6">Echinulin biosynthesis cluster protein A</fullName>
    </alternativeName>
</protein>
<proteinExistence type="evidence at protein level"/>
<evidence type="ECO:0000250" key="1">
    <source>
        <dbReference type="UniProtKB" id="A0A1E3B0T2"/>
    </source>
</evidence>
<evidence type="ECO:0000250" key="2">
    <source>
        <dbReference type="UniProtKB" id="P04798"/>
    </source>
</evidence>
<evidence type="ECO:0000255" key="3"/>
<evidence type="ECO:0000269" key="4">
    <source>
    </source>
</evidence>
<evidence type="ECO:0000269" key="5">
    <source>
    </source>
</evidence>
<evidence type="ECO:0000303" key="6">
    <source>
    </source>
</evidence>
<evidence type="ECO:0000305" key="7"/>
<reference key="1">
    <citation type="journal article" date="2014" name="Nat. Commun.">
        <title>Genomic adaptations of the halophilic Dead Sea filamentous fungus Eurotium rubrum.</title>
        <authorList>
            <person name="Kis-Papo T."/>
            <person name="Weig A.R."/>
            <person name="Riley R."/>
            <person name="Persoh D."/>
            <person name="Salamov A."/>
            <person name="Sun H."/>
            <person name="Lipzen A."/>
            <person name="Wasser S.P."/>
            <person name="Rambold G."/>
            <person name="Grigoriev I.V."/>
            <person name="Nevo E."/>
        </authorList>
    </citation>
    <scope>NUCLEOTIDE SEQUENCE [LARGE SCALE GENOMIC DNA]</scope>
    <source>
        <strain>CBS 135680</strain>
    </source>
</reference>
<reference key="2">
    <citation type="journal article" date="2017" name="Org. Lett.">
        <title>Two prenyltransferases govern a consecutive prenylation cascade in the biosynthesis of echinulin and neoechinulin.</title>
        <authorList>
            <person name="Wohlgemuth V."/>
            <person name="Kindinger F."/>
            <person name="Xie X."/>
            <person name="Wang B.G."/>
            <person name="Li S.M."/>
        </authorList>
    </citation>
    <scope>FUNCTION</scope>
    <scope>PATHWAY</scope>
</reference>
<reference key="3">
    <citation type="journal article" date="2021" name="ACS Chem. Biol.">
        <title>Prenylation and dehydrogenation of a C2-reversely prenylated diketopiperazine as a branching point in the biosynthesis of echinulin family alkaloids in Aspergillus ruber.</title>
        <authorList>
            <person name="Nies J."/>
            <person name="Li S.M."/>
        </authorList>
    </citation>
    <scope>FUNCTION</scope>
    <scope>CATALYTIC ACTIVITY</scope>
    <scope>PATHWAY</scope>
</reference>
<sequence>MWDSPIIFTTMRELVQSVSPAALSWAVVAIYLGTFFWLRSRSSKQRLPLPPGPRGLPLIGNSLQTPAVNPWEKYKEWSDEYGPVMTLSLGLTTTIILSSHQVANDLMEKKSTIYSSRPQLVMFNRLSGGMNSSGMEYGKRWRDHRSLQASVLRPWMTQRYTALRDVETKQLLAELLNTDDFSSCFKRMVASLFMTLAYGKRVQYPDDPEIRGMEELVRVKSEAGEASFRATGQLVEYIPLLQYLPSFLTPWKEMCDRICEQFNKTFVDRLRDGINAPAWTWAKEVSKHKVARPMSELEISYTLGTLYEASLTSQQILRIIVLVAALYPEKTAKAQEELDRVVGTGRLPAAADARNLPYIDAFVKEALRWRPFAPLGAPRESIRDVEYNGYLIPKGATILVNQWALDYNEDMFPEPFSFLPERWVANPNLPFSTFGFGQRGCPGRYFAQDSLFISTARLLWAFNIRTASPVEVEDMLRNPSAGAFLSPIPEFDATFTARDAQRKALIEKEWEISPKESYAILQEVEKELISEGAE</sequence>
<accession>A0A017SR40</accession>
<gene>
    <name evidence="6" type="primary">echP450</name>
    <name type="ORF">EURHEDRAFT_409075</name>
</gene>
<comment type="function">
    <text evidence="1 4 5">Cytochrome P450 monooxygenase; part of the gene cluster that mediates the biosynthesis of echinulin family alkaloid (PubMed:29072465, PubMed:33381959). The pathway begins with the biosynthesis of the cyclic dipeptide cyclo-L-Trp-L-Ala (cyclo-TA) by the NRPS echPS via condensation of L-alanine and L-tryptophan (By similarity). The prenyltransferase echPT1 then catalyzes the first prenylation step, a reverse prenylation reaction at C2, to yield preechinulin (PubMed:33381959). Preechinulin is the substrate of the cytochrome P450 monooxygenase echP450 that catalyzes the formation of the double bond between C10 and C11 to produce neoechulin A (PubMed:33381959). The unique prenyltransferase echPT2 functions as a competitive enzyme with echP450 for preechinulin metabolization and uses preechinulin for effective regiospecific prenylations. Preechinulin is prenylated by echPT2 at C5 or C7. C7-prenylation leads to accumulation of tardioxopiperazine B without further modification by echPT2. In contrast, the C5-prenylated tardioxopiperazine A can be prenylated again by echPT2, predominantly at C7 to form echinulin or less frequently at C4 to give variecolorin L. EchPT2 also accepts neoechilunin A to produce varlecolorin G (prenylation at C5) or isoechinulin A (prenylation at C7). EchPT2 further converts isoechinulin A into dehydroechinulin. Moreover, a yet unidentified enzyme can also convert neoechilunin A into neoechilunin B by introducing a double bond between positions C14 and C17 and thus provides a further substrate to echPT2 for C5 and C7 prenylation (PubMed:33381959).</text>
</comment>
<comment type="catalytic activity">
    <reaction evidence="5">
        <text>preechinulin + reduced [NADPH--hemoprotein reductase] + O2 = neoechinulin A + oxidized [NADPH--hemoprotein reductase] + 2 H2O + H(+)</text>
        <dbReference type="Rhea" id="RHEA:73771"/>
        <dbReference type="Rhea" id="RHEA-COMP:11964"/>
        <dbReference type="Rhea" id="RHEA-COMP:11965"/>
        <dbReference type="ChEBI" id="CHEBI:15377"/>
        <dbReference type="ChEBI" id="CHEBI:15378"/>
        <dbReference type="ChEBI" id="CHEBI:15379"/>
        <dbReference type="ChEBI" id="CHEBI:57618"/>
        <dbReference type="ChEBI" id="CHEBI:58210"/>
        <dbReference type="ChEBI" id="CHEBI:193003"/>
        <dbReference type="ChEBI" id="CHEBI:193004"/>
    </reaction>
    <physiologicalReaction direction="left-to-right" evidence="5">
        <dbReference type="Rhea" id="RHEA:73772"/>
    </physiologicalReaction>
</comment>
<comment type="cofactor">
    <cofactor evidence="2">
        <name>heme</name>
        <dbReference type="ChEBI" id="CHEBI:30413"/>
    </cofactor>
</comment>
<comment type="pathway">
    <text evidence="5">Secondary metabolite biosynthesis.</text>
</comment>
<comment type="pathway">
    <text evidence="5">Alkaloid biosynthesis.</text>
</comment>
<comment type="subcellular location">
    <subcellularLocation>
        <location evidence="3">Membrane</location>
        <topology evidence="3">Single-pass membrane protein</topology>
    </subcellularLocation>
</comment>
<comment type="similarity">
    <text evidence="7">Belongs to the cytochrome P450 family.</text>
</comment>
<dbReference type="EC" id="1.-.-.-" evidence="5"/>
<dbReference type="EMBL" id="KK088413">
    <property type="protein sequence ID" value="EYE98745.1"/>
    <property type="molecule type" value="Genomic_DNA"/>
</dbReference>
<dbReference type="SMR" id="A0A017SR40"/>
<dbReference type="STRING" id="1388766.A0A017SR40"/>
<dbReference type="HOGENOM" id="CLU_001570_2_3_1"/>
<dbReference type="OrthoDB" id="1470350at2759"/>
<dbReference type="Proteomes" id="UP000019804">
    <property type="component" value="Unassembled WGS sequence"/>
</dbReference>
<dbReference type="GO" id="GO:0016020">
    <property type="term" value="C:membrane"/>
    <property type="evidence" value="ECO:0007669"/>
    <property type="project" value="UniProtKB-SubCell"/>
</dbReference>
<dbReference type="GO" id="GO:0020037">
    <property type="term" value="F:heme binding"/>
    <property type="evidence" value="ECO:0007669"/>
    <property type="project" value="InterPro"/>
</dbReference>
<dbReference type="GO" id="GO:0005506">
    <property type="term" value="F:iron ion binding"/>
    <property type="evidence" value="ECO:0007669"/>
    <property type="project" value="InterPro"/>
</dbReference>
<dbReference type="GO" id="GO:0004497">
    <property type="term" value="F:monooxygenase activity"/>
    <property type="evidence" value="ECO:0007669"/>
    <property type="project" value="UniProtKB-KW"/>
</dbReference>
<dbReference type="GO" id="GO:0016705">
    <property type="term" value="F:oxidoreductase activity, acting on paired donors, with incorporation or reduction of molecular oxygen"/>
    <property type="evidence" value="ECO:0007669"/>
    <property type="project" value="InterPro"/>
</dbReference>
<dbReference type="CDD" id="cd11065">
    <property type="entry name" value="CYP64-like"/>
    <property type="match status" value="1"/>
</dbReference>
<dbReference type="Gene3D" id="1.10.630.10">
    <property type="entry name" value="Cytochrome P450"/>
    <property type="match status" value="1"/>
</dbReference>
<dbReference type="InterPro" id="IPR001128">
    <property type="entry name" value="Cyt_P450"/>
</dbReference>
<dbReference type="InterPro" id="IPR017972">
    <property type="entry name" value="Cyt_P450_CS"/>
</dbReference>
<dbReference type="InterPro" id="IPR002401">
    <property type="entry name" value="Cyt_P450_E_grp-I"/>
</dbReference>
<dbReference type="InterPro" id="IPR036396">
    <property type="entry name" value="Cyt_P450_sf"/>
</dbReference>
<dbReference type="InterPro" id="IPR050364">
    <property type="entry name" value="Cytochrome_P450_fung"/>
</dbReference>
<dbReference type="PANTHER" id="PTHR46300:SF1">
    <property type="entry name" value="P450, PUTATIVE (EUROFUNG)-RELATED"/>
    <property type="match status" value="1"/>
</dbReference>
<dbReference type="PANTHER" id="PTHR46300">
    <property type="entry name" value="P450, PUTATIVE (EUROFUNG)-RELATED-RELATED"/>
    <property type="match status" value="1"/>
</dbReference>
<dbReference type="Pfam" id="PF00067">
    <property type="entry name" value="p450"/>
    <property type="match status" value="1"/>
</dbReference>
<dbReference type="PRINTS" id="PR00463">
    <property type="entry name" value="EP450I"/>
</dbReference>
<dbReference type="PRINTS" id="PR00385">
    <property type="entry name" value="P450"/>
</dbReference>
<dbReference type="SUPFAM" id="SSF48264">
    <property type="entry name" value="Cytochrome P450"/>
    <property type="match status" value="1"/>
</dbReference>
<dbReference type="PROSITE" id="PS00086">
    <property type="entry name" value="CYTOCHROME_P450"/>
    <property type="match status" value="1"/>
</dbReference>
<keyword id="KW-0349">Heme</keyword>
<keyword id="KW-0408">Iron</keyword>
<keyword id="KW-0472">Membrane</keyword>
<keyword id="KW-0479">Metal-binding</keyword>
<keyword id="KW-0503">Monooxygenase</keyword>
<keyword id="KW-0560">Oxidoreductase</keyword>
<keyword id="KW-1185">Reference proteome</keyword>
<keyword id="KW-0812">Transmembrane</keyword>
<keyword id="KW-1133">Transmembrane helix</keyword>